<name>IMDH_ECOLI</name>
<sequence>MLRIAKEALTFDDVLLVPAHSTVLPNTADLSTQLTKTIRLNIPMLSAAMDTVTEARLAIALAQEGGIGFIHKNMSIERQAEEVRRVKKHESGVVTDPQTVLPTTTLREVKELTERNGFAGYPVVTEENELVGIITGRDVRFVTDLNQPVSVYMTPKERLVTVREGEAREVVLAKMHEKRVEKALVVDDEFHLIGMITVKDFQKAERKPNACKDEQGRLRVGAAVGAGAGNEERVDALVAAGVDVLLIDSSHGHSEGVLQRIRETRAKYPDLQIIGGNVATAAGARALAEAGCSAVKVGIGPGSICTTRIVTGVGVPQITAVADAVEALEGTGIPVIADGGIRFSGDIAKAIAAGASAVMVGSMLAGTEESPGEIELYQGRSYKSYRGMGSLGAMSKGSSDRYFQSDNAADKLVPEGIEGRVAYKGRLKEIIHQQMGGLRSCMGLTGCGTIDELRTKAEFVRISGAGIQESHVHDVTITKESPNYRLGS</sequence>
<dbReference type="EC" id="1.1.1.205" evidence="1"/>
<dbReference type="EMBL" id="X02209">
    <property type="protein sequence ID" value="CAA26133.1"/>
    <property type="status" value="ALT_INIT"/>
    <property type="molecule type" value="Genomic_DNA"/>
</dbReference>
<dbReference type="EMBL" id="U00096">
    <property type="protein sequence ID" value="AAC75561.1"/>
    <property type="molecule type" value="Genomic_DNA"/>
</dbReference>
<dbReference type="EMBL" id="AP009048">
    <property type="protein sequence ID" value="BAA16395.2"/>
    <property type="molecule type" value="Genomic_DNA"/>
</dbReference>
<dbReference type="EMBL" id="M10101">
    <property type="protein sequence ID" value="AAB18618.1"/>
    <property type="molecule type" value="Genomic_DNA"/>
</dbReference>
<dbReference type="PIR" id="C65027">
    <property type="entry name" value="DEECIP"/>
</dbReference>
<dbReference type="RefSeq" id="NP_417003.1">
    <property type="nucleotide sequence ID" value="NC_000913.3"/>
</dbReference>
<dbReference type="RefSeq" id="WP_001299507.1">
    <property type="nucleotide sequence ID" value="NZ_STEB01000011.1"/>
</dbReference>
<dbReference type="PDB" id="7QBJ">
    <property type="method" value="X-ray"/>
    <property type="resolution" value="2.27 A"/>
    <property type="chains" value="A/B/C/D=5-91, A/B/C/D=205-488"/>
</dbReference>
<dbReference type="PDB" id="7QDX">
    <property type="method" value="X-ray"/>
    <property type="resolution" value="2.90 A"/>
    <property type="chains" value="A/B=5-91, A/B=205-488"/>
</dbReference>
<dbReference type="PDB" id="7QEM">
    <property type="method" value="X-ray"/>
    <property type="resolution" value="3.09 A"/>
    <property type="chains" value="A/B/C/D=1-91, A/B/C/D=205-488"/>
</dbReference>
<dbReference type="PDB" id="9AV1">
    <property type="method" value="X-ray"/>
    <property type="resolution" value="1.70 A"/>
    <property type="chains" value="A=2-89, A=218-488"/>
</dbReference>
<dbReference type="PDB" id="9AV2">
    <property type="method" value="X-ray"/>
    <property type="resolution" value="1.70 A"/>
    <property type="chains" value="A=2-89, A=218-488"/>
</dbReference>
<dbReference type="PDB" id="9AV3">
    <property type="method" value="X-ray"/>
    <property type="resolution" value="1.82 A"/>
    <property type="chains" value="A=2-89, A=218-488"/>
</dbReference>
<dbReference type="PDBsum" id="7QBJ"/>
<dbReference type="PDBsum" id="7QDX"/>
<dbReference type="PDBsum" id="7QEM"/>
<dbReference type="PDBsum" id="9AV1"/>
<dbReference type="PDBsum" id="9AV2"/>
<dbReference type="PDBsum" id="9AV3"/>
<dbReference type="SMR" id="P0ADG7"/>
<dbReference type="BioGRID" id="4263221">
    <property type="interactions" value="94"/>
</dbReference>
<dbReference type="BioGRID" id="851324">
    <property type="interactions" value="5"/>
</dbReference>
<dbReference type="DIP" id="DIP-36207N"/>
<dbReference type="FunCoup" id="P0ADG7">
    <property type="interactions" value="631"/>
</dbReference>
<dbReference type="IntAct" id="P0ADG7">
    <property type="interactions" value="1"/>
</dbReference>
<dbReference type="STRING" id="511145.b2508"/>
<dbReference type="BindingDB" id="P0ADG7"/>
<dbReference type="ChEMBL" id="CHEMBL3630"/>
<dbReference type="iPTMnet" id="P0ADG7"/>
<dbReference type="jPOST" id="P0ADG7"/>
<dbReference type="PaxDb" id="511145-b2508"/>
<dbReference type="EnsemblBacteria" id="AAC75561">
    <property type="protein sequence ID" value="AAC75561"/>
    <property type="gene ID" value="b2508"/>
</dbReference>
<dbReference type="GeneID" id="93774628"/>
<dbReference type="GeneID" id="946985"/>
<dbReference type="KEGG" id="ecj:JW5401"/>
<dbReference type="KEGG" id="eco:b2508"/>
<dbReference type="KEGG" id="ecoc:C3026_13910"/>
<dbReference type="PATRIC" id="fig|1411691.4.peg.4229"/>
<dbReference type="EchoBASE" id="EB0416"/>
<dbReference type="eggNOG" id="COG0516">
    <property type="taxonomic scope" value="Bacteria"/>
</dbReference>
<dbReference type="eggNOG" id="COG0517">
    <property type="taxonomic scope" value="Bacteria"/>
</dbReference>
<dbReference type="HOGENOM" id="CLU_022552_2_2_6"/>
<dbReference type="InParanoid" id="P0ADG7"/>
<dbReference type="OMA" id="MGYCGAK"/>
<dbReference type="OrthoDB" id="9805398at2"/>
<dbReference type="PhylomeDB" id="P0ADG7"/>
<dbReference type="BioCyc" id="EcoCyc:IMP-DEHYDROG-MONOMER"/>
<dbReference type="BioCyc" id="MetaCyc:IMP-DEHYDROG-MONOMER"/>
<dbReference type="SABIO-RK" id="P0ADG7"/>
<dbReference type="UniPathway" id="UPA00601">
    <property type="reaction ID" value="UER00295"/>
</dbReference>
<dbReference type="PRO" id="PR:P0ADG7"/>
<dbReference type="Proteomes" id="UP000000625">
    <property type="component" value="Chromosome"/>
</dbReference>
<dbReference type="GO" id="GO:0005829">
    <property type="term" value="C:cytosol"/>
    <property type="evidence" value="ECO:0000314"/>
    <property type="project" value="EcoCyc"/>
</dbReference>
<dbReference type="GO" id="GO:0032991">
    <property type="term" value="C:protein-containing complex"/>
    <property type="evidence" value="ECO:0000314"/>
    <property type="project" value="EcoCyc"/>
</dbReference>
<dbReference type="GO" id="GO:0005524">
    <property type="term" value="F:ATP binding"/>
    <property type="evidence" value="ECO:0000314"/>
    <property type="project" value="EcoCyc"/>
</dbReference>
<dbReference type="GO" id="GO:1990829">
    <property type="term" value="F:C-rich single-stranded DNA binding"/>
    <property type="evidence" value="ECO:0000314"/>
    <property type="project" value="EcoCyc"/>
</dbReference>
<dbReference type="GO" id="GO:0097216">
    <property type="term" value="F:guanosine tetraphosphate binding"/>
    <property type="evidence" value="ECO:0000314"/>
    <property type="project" value="EcoCyc"/>
</dbReference>
<dbReference type="GO" id="GO:0042802">
    <property type="term" value="F:identical protein binding"/>
    <property type="evidence" value="ECO:0000314"/>
    <property type="project" value="EcoCyc"/>
</dbReference>
<dbReference type="GO" id="GO:0003938">
    <property type="term" value="F:IMP dehydrogenase activity"/>
    <property type="evidence" value="ECO:0000314"/>
    <property type="project" value="EcoCyc"/>
</dbReference>
<dbReference type="GO" id="GO:0046872">
    <property type="term" value="F:metal ion binding"/>
    <property type="evidence" value="ECO:0007669"/>
    <property type="project" value="UniProtKB-UniRule"/>
</dbReference>
<dbReference type="GO" id="GO:0003697">
    <property type="term" value="F:single-stranded DNA binding"/>
    <property type="evidence" value="ECO:0000314"/>
    <property type="project" value="EcoCyc"/>
</dbReference>
<dbReference type="GO" id="GO:0006177">
    <property type="term" value="P:GMP biosynthetic process"/>
    <property type="evidence" value="ECO:0000315"/>
    <property type="project" value="EcoCyc"/>
</dbReference>
<dbReference type="GO" id="GO:0006183">
    <property type="term" value="P:GTP biosynthetic process"/>
    <property type="evidence" value="ECO:0000318"/>
    <property type="project" value="GO_Central"/>
</dbReference>
<dbReference type="GO" id="GO:0051289">
    <property type="term" value="P:protein homotetramerization"/>
    <property type="evidence" value="ECO:0000314"/>
    <property type="project" value="EcoCyc"/>
</dbReference>
<dbReference type="GO" id="GO:0009411">
    <property type="term" value="P:response to UV"/>
    <property type="evidence" value="ECO:0000315"/>
    <property type="project" value="EcoCyc"/>
</dbReference>
<dbReference type="CDD" id="cd04601">
    <property type="entry name" value="CBS_pair_IMPDH"/>
    <property type="match status" value="1"/>
</dbReference>
<dbReference type="CDD" id="cd00381">
    <property type="entry name" value="IMPDH"/>
    <property type="match status" value="1"/>
</dbReference>
<dbReference type="FunFam" id="3.20.20.70:FF:000003">
    <property type="entry name" value="GMP reductase"/>
    <property type="match status" value="1"/>
</dbReference>
<dbReference type="Gene3D" id="3.20.20.70">
    <property type="entry name" value="Aldolase class I"/>
    <property type="match status" value="1"/>
</dbReference>
<dbReference type="HAMAP" id="MF_01964">
    <property type="entry name" value="IMPDH"/>
    <property type="match status" value="1"/>
</dbReference>
<dbReference type="InterPro" id="IPR013785">
    <property type="entry name" value="Aldolase_TIM"/>
</dbReference>
<dbReference type="InterPro" id="IPR000644">
    <property type="entry name" value="CBS_dom"/>
</dbReference>
<dbReference type="InterPro" id="IPR046342">
    <property type="entry name" value="CBS_dom_sf"/>
</dbReference>
<dbReference type="InterPro" id="IPR005990">
    <property type="entry name" value="IMP_DH"/>
</dbReference>
<dbReference type="InterPro" id="IPR015875">
    <property type="entry name" value="IMP_DH/GMP_Rdtase_CS"/>
</dbReference>
<dbReference type="InterPro" id="IPR001093">
    <property type="entry name" value="IMP_DH_GMPRt"/>
</dbReference>
<dbReference type="NCBIfam" id="TIGR01302">
    <property type="entry name" value="IMP_dehydrog"/>
    <property type="match status" value="1"/>
</dbReference>
<dbReference type="PANTHER" id="PTHR11911:SF111">
    <property type="entry name" value="INOSINE-5'-MONOPHOSPHATE DEHYDROGENASE"/>
    <property type="match status" value="1"/>
</dbReference>
<dbReference type="PANTHER" id="PTHR11911">
    <property type="entry name" value="INOSINE-5-MONOPHOSPHATE DEHYDROGENASE RELATED"/>
    <property type="match status" value="1"/>
</dbReference>
<dbReference type="Pfam" id="PF00571">
    <property type="entry name" value="CBS"/>
    <property type="match status" value="2"/>
</dbReference>
<dbReference type="Pfam" id="PF00478">
    <property type="entry name" value="IMPDH"/>
    <property type="match status" value="1"/>
</dbReference>
<dbReference type="PIRSF" id="PIRSF000130">
    <property type="entry name" value="IMPDH"/>
    <property type="match status" value="1"/>
</dbReference>
<dbReference type="SMART" id="SM00116">
    <property type="entry name" value="CBS"/>
    <property type="match status" value="2"/>
</dbReference>
<dbReference type="SMART" id="SM01240">
    <property type="entry name" value="IMPDH"/>
    <property type="match status" value="1"/>
</dbReference>
<dbReference type="SUPFAM" id="SSF54631">
    <property type="entry name" value="CBS-domain pair"/>
    <property type="match status" value="1"/>
</dbReference>
<dbReference type="SUPFAM" id="SSF51412">
    <property type="entry name" value="Inosine monophosphate dehydrogenase (IMPDH)"/>
    <property type="match status" value="1"/>
</dbReference>
<dbReference type="PROSITE" id="PS51371">
    <property type="entry name" value="CBS"/>
    <property type="match status" value="2"/>
</dbReference>
<dbReference type="PROSITE" id="PS00487">
    <property type="entry name" value="IMP_DH_GMP_RED"/>
    <property type="match status" value="1"/>
</dbReference>
<keyword id="KW-0002">3D-structure</keyword>
<keyword id="KW-0007">Acetylation</keyword>
<keyword id="KW-0129">CBS domain</keyword>
<keyword id="KW-0903">Direct protein sequencing</keyword>
<keyword id="KW-0332">GMP biosynthesis</keyword>
<keyword id="KW-0479">Metal-binding</keyword>
<keyword id="KW-0520">NAD</keyword>
<keyword id="KW-0560">Oxidoreductase</keyword>
<keyword id="KW-0630">Potassium</keyword>
<keyword id="KW-0658">Purine biosynthesis</keyword>
<keyword id="KW-1185">Reference proteome</keyword>
<keyword id="KW-0677">Repeat</keyword>
<organism>
    <name type="scientific">Escherichia coli (strain K12)</name>
    <dbReference type="NCBI Taxonomy" id="83333"/>
    <lineage>
        <taxon>Bacteria</taxon>
        <taxon>Pseudomonadati</taxon>
        <taxon>Pseudomonadota</taxon>
        <taxon>Gammaproteobacteria</taxon>
        <taxon>Enterobacterales</taxon>
        <taxon>Enterobacteriaceae</taxon>
        <taxon>Escherichia</taxon>
    </lineage>
</organism>
<comment type="function">
    <text evidence="1 5">Catalyzes the conversion of inosine 5'-phosphate (IMP) to xanthosine 5'-phosphate (XMP), the first committed and rate-limiting step in the de novo synthesis of guanine nucleotides, and therefore plays an important role in the regulation of cell growth.</text>
</comment>
<comment type="catalytic activity">
    <reaction evidence="1">
        <text>IMP + NAD(+) + H2O = XMP + NADH + H(+)</text>
        <dbReference type="Rhea" id="RHEA:11708"/>
        <dbReference type="ChEBI" id="CHEBI:15377"/>
        <dbReference type="ChEBI" id="CHEBI:15378"/>
        <dbReference type="ChEBI" id="CHEBI:57464"/>
        <dbReference type="ChEBI" id="CHEBI:57540"/>
        <dbReference type="ChEBI" id="CHEBI:57945"/>
        <dbReference type="ChEBI" id="CHEBI:58053"/>
        <dbReference type="EC" id="1.1.1.205"/>
    </reaction>
</comment>
<comment type="cofactor">
    <cofactor evidence="1">
        <name>K(+)</name>
        <dbReference type="ChEBI" id="CHEBI:29103"/>
    </cofactor>
</comment>
<comment type="activity regulation">
    <text evidence="1 5">Mycophenolic acid (MPA) is a non-competitive inhibitor that prevents formation of the closed enzyme conformation by binding to the same site as the amobile flap. In contrast, mizoribine monophosphate (MZP) is a competitive inhibitor that induces the closed conformation. MPA is a potent inhibitor of mammalian IMPDHs but a poor inhibitor of the bacterial enzymes. MZP is a more potent inhibitor of bacterial IMPDH. IMP dehydrogenase subunit of E.coli contains a cysteine at the IMP binding site and is inhibited in a simple competitive manner by GMP. It does not exhibit allosteric properties as does IMP dehydrogenase from B.subtilis or S.typhimurium.</text>
</comment>
<comment type="biophysicochemical properties">
    <kinetics>
        <KM evidence="5">61 uM for Inosine 5'-phosphate</KM>
        <KM evidence="5">2000 uM for NAD(+)</KM>
        <KM evidence="5">2.8 mM for K(+)</KM>
    </kinetics>
</comment>
<comment type="pathway">
    <text evidence="1">Purine metabolism; XMP biosynthesis via de novo pathway; XMP from IMP: step 1/1.</text>
</comment>
<comment type="subunit">
    <text evidence="1 5">Homotetramer.</text>
</comment>
<comment type="domain">
    <text evidence="2 4">The CBS domain of IMPDH is a negative trans-regulator of adenylate nucleotide synthesis, and this role is independent of the catalytic function of IMPDH in the de novo GMP biosynthesis. Deletion of the CBS domain derepresses the synthesis of AMP from IMP.</text>
</comment>
<comment type="similarity">
    <text evidence="1">Belongs to the IMPDH/GMPR family.</text>
</comment>
<comment type="sequence caution" evidence="6">
    <conflict type="erroneous initiation">
        <sequence resource="EMBL-CDS" id="CAA26133"/>
    </conflict>
</comment>
<proteinExistence type="evidence at protein level"/>
<feature type="chain" id="PRO_0000093695" description="Inosine-5'-monophosphate dehydrogenase">
    <location>
        <begin position="1"/>
        <end position="488"/>
    </location>
</feature>
<feature type="domain" description="CBS 1" evidence="1">
    <location>
        <begin position="93"/>
        <end position="149"/>
    </location>
</feature>
<feature type="domain" description="CBS 2" evidence="1">
    <location>
        <begin position="153"/>
        <end position="214"/>
    </location>
</feature>
<feature type="active site" description="Thioimidate intermediate" evidence="1">
    <location>
        <position position="305"/>
    </location>
</feature>
<feature type="active site" description="Proton acceptor" evidence="1">
    <location>
        <position position="401"/>
    </location>
</feature>
<feature type="binding site" evidence="1">
    <location>
        <begin position="248"/>
        <end position="250"/>
    </location>
    <ligand>
        <name>NAD(+)</name>
        <dbReference type="ChEBI" id="CHEBI:57540"/>
    </ligand>
</feature>
<feature type="binding site" evidence="1">
    <location>
        <position position="248"/>
    </location>
    <ligand>
        <name>NAD(+)</name>
        <dbReference type="ChEBI" id="CHEBI:57540"/>
    </ligand>
</feature>
<feature type="binding site" evidence="1">
    <location>
        <begin position="298"/>
        <end position="300"/>
    </location>
    <ligand>
        <name>NAD(+)</name>
        <dbReference type="ChEBI" id="CHEBI:57540"/>
    </ligand>
</feature>
<feature type="binding site" description="in other chain" evidence="1">
    <location>
        <position position="300"/>
    </location>
    <ligand>
        <name>K(+)</name>
        <dbReference type="ChEBI" id="CHEBI:29103"/>
        <note>ligand shared between two tetrameric partners</note>
    </ligand>
</feature>
<feature type="binding site" description="in other chain" evidence="1">
    <location>
        <position position="302"/>
    </location>
    <ligand>
        <name>K(+)</name>
        <dbReference type="ChEBI" id="CHEBI:29103"/>
        <note>ligand shared between two tetrameric partners</note>
    </ligand>
</feature>
<feature type="binding site" evidence="1">
    <location>
        <position position="303"/>
    </location>
    <ligand>
        <name>IMP</name>
        <dbReference type="ChEBI" id="CHEBI:58053"/>
    </ligand>
</feature>
<feature type="binding site" description="in other chain" evidence="1">
    <location>
        <position position="305"/>
    </location>
    <ligand>
        <name>K(+)</name>
        <dbReference type="ChEBI" id="CHEBI:29103"/>
        <note>ligand shared between two tetrameric partners</note>
    </ligand>
</feature>
<feature type="binding site" evidence="1">
    <location>
        <begin position="338"/>
        <end position="340"/>
    </location>
    <ligand>
        <name>IMP</name>
        <dbReference type="ChEBI" id="CHEBI:58053"/>
    </ligand>
</feature>
<feature type="binding site" evidence="1">
    <location>
        <begin position="361"/>
        <end position="362"/>
    </location>
    <ligand>
        <name>IMP</name>
        <dbReference type="ChEBI" id="CHEBI:58053"/>
    </ligand>
</feature>
<feature type="binding site" evidence="1">
    <location>
        <begin position="385"/>
        <end position="389"/>
    </location>
    <ligand>
        <name>IMP</name>
        <dbReference type="ChEBI" id="CHEBI:58053"/>
    </ligand>
</feature>
<feature type="binding site" evidence="1">
    <location>
        <position position="415"/>
    </location>
    <ligand>
        <name>IMP</name>
        <dbReference type="ChEBI" id="CHEBI:58053"/>
    </ligand>
</feature>
<feature type="binding site" evidence="1">
    <location>
        <position position="469"/>
    </location>
    <ligand>
        <name>K(+)</name>
        <dbReference type="ChEBI" id="CHEBI:29103"/>
        <note>ligand shared between two tetrameric partners</note>
    </ligand>
</feature>
<feature type="binding site" evidence="1">
    <location>
        <position position="470"/>
    </location>
    <ligand>
        <name>K(+)</name>
        <dbReference type="ChEBI" id="CHEBI:29103"/>
        <note>ligand shared between two tetrameric partners</note>
    </ligand>
</feature>
<feature type="binding site" evidence="1">
    <location>
        <position position="471"/>
    </location>
    <ligand>
        <name>K(+)</name>
        <dbReference type="ChEBI" id="CHEBI:29103"/>
        <note>ligand shared between two tetrameric partners</note>
    </ligand>
</feature>
<feature type="modified residue" description="N6-acetyllysine" evidence="3">
    <location>
        <position position="267"/>
    </location>
</feature>
<feature type="modified residue" description="N6-acetyllysine" evidence="3">
    <location>
        <position position="428"/>
    </location>
</feature>
<feature type="mutagenesis site" description="Causes a 38-fold increase in the value of Km for K(+). No change is observed in the value of Km for IMP." evidence="5">
    <original>D</original>
    <variation>A</variation>
    <location>
        <position position="13"/>
    </location>
</feature>
<feature type="mutagenesis site" description="Causes a 17-fold increase in the value of Km for K(+)." evidence="5">
    <original>D</original>
    <variation>A</variation>
    <location>
        <position position="50"/>
    </location>
</feature>
<feature type="mutagenesis site" description="No effect." evidence="5">
    <original>E</original>
    <variation>A</variation>
    <location>
        <position position="54"/>
    </location>
</feature>
<feature type="mutagenesis site" description="No effect." evidence="5">
    <original>D</original>
    <variation>A</variation>
    <location>
        <position position="138"/>
    </location>
</feature>
<feature type="mutagenesis site" description="No effect." evidence="5">
    <original>D</original>
    <variation>A</variation>
    <location>
        <position position="200"/>
    </location>
</feature>
<feature type="mutagenesis site" description="No effect." evidence="5">
    <original>D</original>
    <variation>A</variation>
    <location>
        <position position="243"/>
    </location>
</feature>
<feature type="mutagenesis site" description="Causes a 130-fold decrease in the value of kcat." evidence="5">
    <original>D</original>
    <variation>A</variation>
    <location>
        <position position="248"/>
    </location>
</feature>
<feature type="mutagenesis site" description="Decreases the value of kcat by 600-fold. Increases the value of Km for IMP by 12-fold." evidence="5">
    <original>D</original>
    <variation>A</variation>
    <location>
        <position position="338"/>
    </location>
</feature>
<feature type="mutagenesis site" description="No effect." evidence="5">
    <original>E</original>
    <variation>A</variation>
    <location>
        <position position="369"/>
    </location>
</feature>
<feature type="mutagenesis site" description="No effect." evidence="5">
    <original>E</original>
    <variation>A</variation>
    <location>
        <position position="373"/>
    </location>
</feature>
<feature type="mutagenesis site" description="Increases the value of Km for K(+) by 17-fold." evidence="5">
    <original>E</original>
    <variation>A</variation>
    <location>
        <position position="469"/>
    </location>
</feature>
<feature type="sequence conflict" description="In Ref. 1; CAA26133/AAB18618." evidence="6" ref="1">
    <original>R</original>
    <variation>A</variation>
    <location>
        <position position="206"/>
    </location>
</feature>
<feature type="helix" evidence="7">
    <location>
        <begin position="11"/>
        <end position="13"/>
    </location>
</feature>
<feature type="strand" evidence="7">
    <location>
        <begin position="14"/>
        <end position="16"/>
    </location>
</feature>
<feature type="helix" evidence="7">
    <location>
        <begin position="25"/>
        <end position="27"/>
    </location>
</feature>
<feature type="strand" evidence="7">
    <location>
        <begin position="32"/>
        <end position="37"/>
    </location>
</feature>
<feature type="strand" evidence="7">
    <location>
        <begin position="39"/>
        <end position="46"/>
    </location>
</feature>
<feature type="turn" evidence="7">
    <location>
        <begin position="50"/>
        <end position="52"/>
    </location>
</feature>
<feature type="helix" evidence="7">
    <location>
        <begin position="55"/>
        <end position="62"/>
    </location>
</feature>
<feature type="turn" evidence="7">
    <location>
        <begin position="63"/>
        <end position="65"/>
    </location>
</feature>
<feature type="strand" evidence="7">
    <location>
        <begin position="67"/>
        <end position="70"/>
    </location>
</feature>
<feature type="strand" evidence="7">
    <location>
        <begin position="72"/>
        <end position="74"/>
    </location>
</feature>
<feature type="helix" evidence="7">
    <location>
        <begin position="76"/>
        <end position="87"/>
    </location>
</feature>
<feature type="strand" evidence="7">
    <location>
        <begin position="221"/>
        <end position="227"/>
    </location>
</feature>
<feature type="helix" evidence="7">
    <location>
        <begin position="231"/>
        <end position="239"/>
    </location>
</feature>
<feature type="strand" evidence="7">
    <location>
        <begin position="243"/>
        <end position="248"/>
    </location>
</feature>
<feature type="helix" evidence="7">
    <location>
        <begin position="255"/>
        <end position="267"/>
    </location>
</feature>
<feature type="strand" evidence="7">
    <location>
        <begin position="272"/>
        <end position="278"/>
    </location>
</feature>
<feature type="helix" evidence="7">
    <location>
        <begin position="281"/>
        <end position="290"/>
    </location>
</feature>
<feature type="strand" evidence="7">
    <location>
        <begin position="293"/>
        <end position="297"/>
    </location>
</feature>
<feature type="helix" evidence="7">
    <location>
        <begin position="306"/>
        <end position="311"/>
    </location>
</feature>
<feature type="helix" evidence="7">
    <location>
        <begin position="317"/>
        <end position="327"/>
    </location>
</feature>
<feature type="turn" evidence="7">
    <location>
        <begin position="328"/>
        <end position="332"/>
    </location>
</feature>
<feature type="strand" evidence="7">
    <location>
        <begin position="335"/>
        <end position="339"/>
    </location>
</feature>
<feature type="helix" evidence="7">
    <location>
        <begin position="344"/>
        <end position="352"/>
    </location>
</feature>
<feature type="strand" evidence="7">
    <location>
        <begin position="356"/>
        <end position="361"/>
    </location>
</feature>
<feature type="turn" evidence="7">
    <location>
        <begin position="362"/>
        <end position="366"/>
    </location>
</feature>
<feature type="strand" evidence="8">
    <location>
        <begin position="367"/>
        <end position="369"/>
    </location>
</feature>
<feature type="strand" evidence="7">
    <location>
        <begin position="370"/>
        <end position="377"/>
    </location>
</feature>
<feature type="strand" evidence="7">
    <location>
        <begin position="380"/>
        <end position="384"/>
    </location>
</feature>
<feature type="strand" evidence="7">
    <location>
        <begin position="420"/>
        <end position="422"/>
    </location>
</feature>
<feature type="helix" evidence="7">
    <location>
        <begin position="427"/>
        <end position="445"/>
    </location>
</feature>
<feature type="helix" evidence="7">
    <location>
        <begin position="450"/>
        <end position="456"/>
    </location>
</feature>
<feature type="strand" evidence="7">
    <location>
        <begin position="459"/>
        <end position="461"/>
    </location>
</feature>
<gene>
    <name evidence="1" type="primary">guaB</name>
    <name type="synonym">guaR</name>
    <name type="ordered locus">b2508</name>
    <name type="ordered locus">JW5401</name>
</gene>
<accession>P0ADG7</accession>
<accession>P06981</accession>
<accession>P76574</accession>
<accession>P78202</accession>
<reference key="1">
    <citation type="journal article" date="1985" name="Nucleic Acids Res.">
        <title>Nucleotide sequence of the guaB locus encoding IMP dehydrogenase of Escherichia coli K12.</title>
        <authorList>
            <person name="Tiedeman A.A."/>
            <person name="Smith J.M."/>
        </authorList>
    </citation>
    <scope>NUCLEOTIDE SEQUENCE [GENOMIC DNA]</scope>
    <source>
        <strain>K12</strain>
    </source>
</reference>
<reference key="2">
    <citation type="journal article" date="1997" name="DNA Res.">
        <title>Construction of a contiguous 874-kb sequence of the Escherichia coli-K12 genome corresponding to 50.0-68.8 min on the linkage map and analysis of its sequence features.</title>
        <authorList>
            <person name="Yamamoto Y."/>
            <person name="Aiba H."/>
            <person name="Baba T."/>
            <person name="Hayashi K."/>
            <person name="Inada T."/>
            <person name="Isono K."/>
            <person name="Itoh T."/>
            <person name="Kimura S."/>
            <person name="Kitagawa M."/>
            <person name="Makino K."/>
            <person name="Miki T."/>
            <person name="Mitsuhashi N."/>
            <person name="Mizobuchi K."/>
            <person name="Mori H."/>
            <person name="Nakade S."/>
            <person name="Nakamura Y."/>
            <person name="Nashimoto H."/>
            <person name="Oshima T."/>
            <person name="Oyama S."/>
            <person name="Saito N."/>
            <person name="Sampei G."/>
            <person name="Satoh Y."/>
            <person name="Sivasundaram S."/>
            <person name="Tagami H."/>
            <person name="Takahashi H."/>
            <person name="Takeda J."/>
            <person name="Takemoto K."/>
            <person name="Uehara K."/>
            <person name="Wada C."/>
            <person name="Yamagata S."/>
            <person name="Horiuchi T."/>
        </authorList>
    </citation>
    <scope>NUCLEOTIDE SEQUENCE [LARGE SCALE GENOMIC DNA]</scope>
    <source>
        <strain>K12 / W3110 / ATCC 27325 / DSM 5911</strain>
    </source>
</reference>
<reference key="3">
    <citation type="journal article" date="1997" name="Science">
        <title>The complete genome sequence of Escherichia coli K-12.</title>
        <authorList>
            <person name="Blattner F.R."/>
            <person name="Plunkett G. III"/>
            <person name="Bloch C.A."/>
            <person name="Perna N.T."/>
            <person name="Burland V."/>
            <person name="Riley M."/>
            <person name="Collado-Vides J."/>
            <person name="Glasner J.D."/>
            <person name="Rode C.K."/>
            <person name="Mayhew G.F."/>
            <person name="Gregor J."/>
            <person name="Davis N.W."/>
            <person name="Kirkpatrick H.A."/>
            <person name="Goeden M.A."/>
            <person name="Rose D.J."/>
            <person name="Mau B."/>
            <person name="Shao Y."/>
        </authorList>
    </citation>
    <scope>NUCLEOTIDE SEQUENCE [LARGE SCALE GENOMIC DNA]</scope>
    <source>
        <strain>K12 / MG1655 / ATCC 47076</strain>
    </source>
</reference>
<reference key="4">
    <citation type="journal article" date="2006" name="Mol. Syst. Biol.">
        <title>Highly accurate genome sequences of Escherichia coli K-12 strains MG1655 and W3110.</title>
        <authorList>
            <person name="Hayashi K."/>
            <person name="Morooka N."/>
            <person name="Yamamoto Y."/>
            <person name="Fujita K."/>
            <person name="Isono K."/>
            <person name="Choi S."/>
            <person name="Ohtsubo E."/>
            <person name="Baba T."/>
            <person name="Wanner B.L."/>
            <person name="Mori H."/>
            <person name="Horiuchi T."/>
        </authorList>
    </citation>
    <scope>NUCLEOTIDE SEQUENCE [LARGE SCALE GENOMIC DNA]</scope>
    <source>
        <strain>K12 / W3110 / ATCC 27325 / DSM 5911</strain>
    </source>
</reference>
<reference key="5">
    <citation type="journal article" date="1985" name="Gene">
        <title>Nucleotide sequence and organisation of the gua promoter region of Escherichia coli.</title>
        <authorList>
            <person name="Thomas M.S."/>
            <person name="Drabble W.T."/>
        </authorList>
    </citation>
    <scope>NUCLEOTIDE SEQUENCE [GENOMIC DNA] OF 1-96</scope>
</reference>
<reference key="6">
    <citation type="journal article" date="1992" name="Mol. Gen. Genet.">
        <title>Regulation of the gua operon of Escherichia coli by the DnaA protein.</title>
        <authorList>
            <person name="Tesfa-Selase F."/>
            <person name="Drabble W.T."/>
        </authorList>
    </citation>
    <scope>NUCLEOTIDE SEQUENCE [GENOMIC DNA] OF 1-90</scope>
</reference>
<reference key="7">
    <citation type="journal article" date="1997" name="Electrophoresis">
        <title>Comparing the predicted and observed properties of proteins encoded in the genome of Escherichia coli K-12.</title>
        <authorList>
            <person name="Link A.J."/>
            <person name="Robison K."/>
            <person name="Church G.M."/>
        </authorList>
    </citation>
    <scope>PROTEIN SEQUENCE OF 1-12</scope>
    <source>
        <strain>K12 / EMG2</strain>
    </source>
</reference>
<reference key="8">
    <citation type="submission" date="1996-02" db="UniProtKB">
        <authorList>
            <person name="Frutiger S."/>
            <person name="Hughes G.J."/>
            <person name="Pasquali C."/>
            <person name="Hochstrasser D.F."/>
        </authorList>
    </citation>
    <scope>PARTIAL PROTEIN SEQUENCE OF 1-11</scope>
    <source>
        <strain>K12 / W3110 / ATCC 27325 / DSM 5911</strain>
    </source>
</reference>
<reference key="9">
    <citation type="journal article" date="1998" name="Electrophoresis">
        <title>Extraction of membrane proteins by differential solubilization for separation using two-dimensional gel electrophoresis.</title>
        <authorList>
            <person name="Molloy M.P."/>
            <person name="Herbert B.R."/>
            <person name="Walsh B.J."/>
            <person name="Tyler M.I."/>
            <person name="Traini M."/>
            <person name="Sanchez J.-C."/>
            <person name="Hochstrasser D.F."/>
            <person name="Williams K.L."/>
            <person name="Gooley A.A."/>
        </authorList>
    </citation>
    <scope>PROTEIN SEQUENCE OF 1-5</scope>
    <source>
        <strain>K12 / W3110 / ATCC 27325 / DSM 5911</strain>
    </source>
</reference>
<reference key="10">
    <citation type="journal article" date="1998" name="J. Mol. Biol.">
        <title>Protein identification with N and C-terminal sequence tags in proteome projects.</title>
        <authorList>
            <person name="Wilkins M.R."/>
            <person name="Gasteiger E."/>
            <person name="Tonella L."/>
            <person name="Ou K."/>
            <person name="Tyler M."/>
            <person name="Sanchez J.-C."/>
            <person name="Gooley A.A."/>
            <person name="Walsh B.J."/>
            <person name="Bairoch A."/>
            <person name="Appel R.D."/>
            <person name="Williams K.L."/>
            <person name="Hochstrasser D.F."/>
        </authorList>
    </citation>
    <scope>PROTEIN SEQUENCE OF 1-4</scope>
    <source>
        <strain>K12 / W3110 / ATCC 27325 / DSM 5911</strain>
    </source>
</reference>
<reference key="11">
    <citation type="journal article" date="1997" name="Biochemistry">
        <title>The roles of conserved carboxylate residues in IMP dehydrogenase and identification of a transition state analog.</title>
        <authorList>
            <person name="Kerr K.M."/>
            <person name="Hedstrom L."/>
        </authorList>
    </citation>
    <scope>FUNCTION</scope>
    <scope>BIOPHYSICOCHEMICAL PROPERTIES</scope>
    <scope>SUBUNIT</scope>
    <scope>ACTIVITY REGULATION</scope>
    <scope>MUTAGENESIS OF ASP-13; ASP-50; GLU-54; ASP-138; ASP-200; ASP-243; ASP-248; ASP-338; GLU-369; GLU-373 AND GLU-469</scope>
    <source>
        <strain>K12</strain>
    </source>
</reference>
<reference key="12">
    <citation type="journal article" date="2008" name="Mol. Microbiol.">
        <title>The CBS subdomain of inosine 5'-monophosphate dehydrogenase regulates purine nucleotide turnover.</title>
        <authorList>
            <person name="Pimkin M."/>
            <person name="Markham G.D."/>
        </authorList>
    </citation>
    <scope>DOMAIN CBS</scope>
    <source>
        <strain>K12 / BW25113</strain>
    </source>
</reference>
<reference key="13">
    <citation type="journal article" date="2009" name="J. Biol. Chem.">
        <title>A regulatory role of the Bateman domain of IMP dehydrogenase in adenylate nucleotide biosynthesis.</title>
        <authorList>
            <person name="Pimkin M."/>
            <person name="Pimkina J."/>
            <person name="Markham G.D."/>
        </authorList>
    </citation>
    <scope>DOMAIN CBS</scope>
    <source>
        <strain>K12 / BW25113</strain>
    </source>
</reference>
<reference key="14">
    <citation type="journal article" date="2009" name="Mol. Cell. Proteomics">
        <title>Lysine acetylation is a highly abundant and evolutionarily conserved modification in Escherichia coli.</title>
        <authorList>
            <person name="Zhang J."/>
            <person name="Sprung R."/>
            <person name="Pei J."/>
            <person name="Tan X."/>
            <person name="Kim S."/>
            <person name="Zhu H."/>
            <person name="Liu C.F."/>
            <person name="Grishin N.V."/>
            <person name="Zhao Y."/>
        </authorList>
    </citation>
    <scope>ACETYLATION [LARGE SCALE ANALYSIS] AT LYS-267 AND LYS-428</scope>
    <scope>IDENTIFICATION BY MASS SPECTROMETRY</scope>
    <source>
        <strain>K12 / JW1106</strain>
        <strain>K12 / MG1655 / ATCC 47076</strain>
    </source>
</reference>
<evidence type="ECO:0000255" key="1">
    <source>
        <dbReference type="HAMAP-Rule" id="MF_01964"/>
    </source>
</evidence>
<evidence type="ECO:0000269" key="2">
    <source>
    </source>
</evidence>
<evidence type="ECO:0000269" key="3">
    <source>
    </source>
</evidence>
<evidence type="ECO:0000269" key="4">
    <source>
    </source>
</evidence>
<evidence type="ECO:0000269" key="5">
    <source>
    </source>
</evidence>
<evidence type="ECO:0000305" key="6"/>
<evidence type="ECO:0007829" key="7">
    <source>
        <dbReference type="PDB" id="7QBJ"/>
    </source>
</evidence>
<evidence type="ECO:0007829" key="8">
    <source>
        <dbReference type="PDB" id="7QDX"/>
    </source>
</evidence>
<protein>
    <recommendedName>
        <fullName evidence="1">Inosine-5'-monophosphate dehydrogenase</fullName>
        <shortName evidence="1">IMP dehydrogenase</shortName>
        <shortName evidence="1">IMPD</shortName>
        <shortName evidence="1">IMPDH</shortName>
        <ecNumber evidence="1">1.1.1.205</ecNumber>
    </recommendedName>
</protein>